<name>OTC_STRU0</name>
<keyword id="KW-0056">Arginine metabolism</keyword>
<keyword id="KW-0963">Cytoplasm</keyword>
<keyword id="KW-1185">Reference proteome</keyword>
<keyword id="KW-0808">Transferase</keyword>
<feature type="chain" id="PRO_1000163987" description="Ornithine carbamoyltransferase">
    <location>
        <begin position="1"/>
        <end position="337"/>
    </location>
</feature>
<feature type="binding site" evidence="2">
    <location>
        <begin position="57"/>
        <end position="60"/>
    </location>
    <ligand>
        <name>carbamoyl phosphate</name>
        <dbReference type="ChEBI" id="CHEBI:58228"/>
    </ligand>
</feature>
<feature type="binding site" evidence="2">
    <location>
        <position position="84"/>
    </location>
    <ligand>
        <name>carbamoyl phosphate</name>
        <dbReference type="ChEBI" id="CHEBI:58228"/>
    </ligand>
</feature>
<feature type="binding site" evidence="2">
    <location>
        <position position="108"/>
    </location>
    <ligand>
        <name>carbamoyl phosphate</name>
        <dbReference type="ChEBI" id="CHEBI:58228"/>
    </ligand>
</feature>
<feature type="binding site" evidence="2">
    <location>
        <begin position="135"/>
        <end position="138"/>
    </location>
    <ligand>
        <name>carbamoyl phosphate</name>
        <dbReference type="ChEBI" id="CHEBI:58228"/>
    </ligand>
</feature>
<feature type="binding site" evidence="2">
    <location>
        <position position="167"/>
    </location>
    <ligand>
        <name>L-ornithine</name>
        <dbReference type="ChEBI" id="CHEBI:46911"/>
    </ligand>
</feature>
<feature type="binding site" evidence="2">
    <location>
        <position position="231"/>
    </location>
    <ligand>
        <name>L-ornithine</name>
        <dbReference type="ChEBI" id="CHEBI:46911"/>
    </ligand>
</feature>
<feature type="binding site" evidence="2">
    <location>
        <begin position="235"/>
        <end position="236"/>
    </location>
    <ligand>
        <name>L-ornithine</name>
        <dbReference type="ChEBI" id="CHEBI:46911"/>
    </ligand>
</feature>
<feature type="binding site" evidence="2">
    <location>
        <begin position="272"/>
        <end position="273"/>
    </location>
    <ligand>
        <name>carbamoyl phosphate</name>
        <dbReference type="ChEBI" id="CHEBI:58228"/>
    </ligand>
</feature>
<feature type="binding site" evidence="2">
    <location>
        <position position="317"/>
    </location>
    <ligand>
        <name>carbamoyl phosphate</name>
        <dbReference type="ChEBI" id="CHEBI:58228"/>
    </ligand>
</feature>
<dbReference type="EC" id="2.1.3.3" evidence="2"/>
<dbReference type="EMBL" id="AM946015">
    <property type="protein sequence ID" value="CAR42883.1"/>
    <property type="molecule type" value="Genomic_DNA"/>
</dbReference>
<dbReference type="SMR" id="B9DUY9"/>
<dbReference type="STRING" id="218495.SUB1327"/>
<dbReference type="KEGG" id="sub:SUB1327"/>
<dbReference type="eggNOG" id="COG0078">
    <property type="taxonomic scope" value="Bacteria"/>
</dbReference>
<dbReference type="HOGENOM" id="CLU_043846_3_1_9"/>
<dbReference type="OrthoDB" id="9802587at2"/>
<dbReference type="UniPathway" id="UPA00254">
    <property type="reaction ID" value="UER00365"/>
</dbReference>
<dbReference type="Proteomes" id="UP000000449">
    <property type="component" value="Chromosome"/>
</dbReference>
<dbReference type="GO" id="GO:0005737">
    <property type="term" value="C:cytoplasm"/>
    <property type="evidence" value="ECO:0007669"/>
    <property type="project" value="UniProtKB-SubCell"/>
</dbReference>
<dbReference type="GO" id="GO:0016597">
    <property type="term" value="F:amino acid binding"/>
    <property type="evidence" value="ECO:0007669"/>
    <property type="project" value="InterPro"/>
</dbReference>
<dbReference type="GO" id="GO:0004585">
    <property type="term" value="F:ornithine carbamoyltransferase activity"/>
    <property type="evidence" value="ECO:0007669"/>
    <property type="project" value="UniProtKB-UniRule"/>
</dbReference>
<dbReference type="GO" id="GO:0042450">
    <property type="term" value="P:arginine biosynthetic process via ornithine"/>
    <property type="evidence" value="ECO:0007669"/>
    <property type="project" value="TreeGrafter"/>
</dbReference>
<dbReference type="GO" id="GO:0019547">
    <property type="term" value="P:arginine catabolic process to ornithine"/>
    <property type="evidence" value="ECO:0007669"/>
    <property type="project" value="UniProtKB-UniRule"/>
</dbReference>
<dbReference type="GO" id="GO:0019240">
    <property type="term" value="P:citrulline biosynthetic process"/>
    <property type="evidence" value="ECO:0007669"/>
    <property type="project" value="TreeGrafter"/>
</dbReference>
<dbReference type="FunFam" id="3.40.50.1370:FF:000004">
    <property type="entry name" value="Ornithine carbamoyltransferase"/>
    <property type="match status" value="1"/>
</dbReference>
<dbReference type="Gene3D" id="3.40.50.1370">
    <property type="entry name" value="Aspartate/ornithine carbamoyltransferase"/>
    <property type="match status" value="2"/>
</dbReference>
<dbReference type="HAMAP" id="MF_01109">
    <property type="entry name" value="OTCase"/>
    <property type="match status" value="1"/>
</dbReference>
<dbReference type="InterPro" id="IPR006132">
    <property type="entry name" value="Asp/Orn_carbamoyltranf_P-bd"/>
</dbReference>
<dbReference type="InterPro" id="IPR006130">
    <property type="entry name" value="Asp/Orn_carbamoylTrfase"/>
</dbReference>
<dbReference type="InterPro" id="IPR036901">
    <property type="entry name" value="Asp/Orn_carbamoylTrfase_sf"/>
</dbReference>
<dbReference type="InterPro" id="IPR006131">
    <property type="entry name" value="Asp_carbamoyltransf_Asp/Orn-bd"/>
</dbReference>
<dbReference type="InterPro" id="IPR002292">
    <property type="entry name" value="Orn/put_carbamltrans"/>
</dbReference>
<dbReference type="InterPro" id="IPR024904">
    <property type="entry name" value="OTCase_ArgI"/>
</dbReference>
<dbReference type="NCBIfam" id="TIGR00658">
    <property type="entry name" value="orni_carb_tr"/>
    <property type="match status" value="1"/>
</dbReference>
<dbReference type="NCBIfam" id="NF001986">
    <property type="entry name" value="PRK00779.1"/>
    <property type="match status" value="1"/>
</dbReference>
<dbReference type="PANTHER" id="PTHR45753:SF1">
    <property type="entry name" value="ORNITHINE CARBAMOYLTRANSFERASE, CATABOLIC"/>
    <property type="match status" value="1"/>
</dbReference>
<dbReference type="PANTHER" id="PTHR45753">
    <property type="entry name" value="ORNITHINE CARBAMOYLTRANSFERASE, MITOCHONDRIAL"/>
    <property type="match status" value="1"/>
</dbReference>
<dbReference type="Pfam" id="PF00185">
    <property type="entry name" value="OTCace"/>
    <property type="match status" value="1"/>
</dbReference>
<dbReference type="Pfam" id="PF02729">
    <property type="entry name" value="OTCace_N"/>
    <property type="match status" value="1"/>
</dbReference>
<dbReference type="PRINTS" id="PR00100">
    <property type="entry name" value="AOTCASE"/>
</dbReference>
<dbReference type="PRINTS" id="PR00102">
    <property type="entry name" value="OTCASE"/>
</dbReference>
<dbReference type="SUPFAM" id="SSF53671">
    <property type="entry name" value="Aspartate/ornithine carbamoyltransferase"/>
    <property type="match status" value="1"/>
</dbReference>
<dbReference type="PROSITE" id="PS00097">
    <property type="entry name" value="CARBAMOYLTRANSFERASE"/>
    <property type="match status" value="1"/>
</dbReference>
<reference key="1">
    <citation type="journal article" date="2009" name="BMC Genomics">
        <title>Evidence for niche adaptation in the genome of the bovine pathogen Streptococcus uberis.</title>
        <authorList>
            <person name="Ward P.N."/>
            <person name="Holden M.T.G."/>
            <person name="Leigh J.A."/>
            <person name="Lennard N."/>
            <person name="Bignell A."/>
            <person name="Barron A."/>
            <person name="Clark L."/>
            <person name="Quail M.A."/>
            <person name="Woodward J."/>
            <person name="Barrell B.G."/>
            <person name="Egan S.A."/>
            <person name="Field T.R."/>
            <person name="Maskell D."/>
            <person name="Kehoe M."/>
            <person name="Dowson C.G."/>
            <person name="Chanter N."/>
            <person name="Whatmore A.M."/>
            <person name="Bentley S.D."/>
            <person name="Parkhill J."/>
        </authorList>
    </citation>
    <scope>NUCLEOTIDE SEQUENCE [LARGE SCALE GENOMIC DNA]</scope>
    <source>
        <strain>ATCC BAA-854 / 0140J</strain>
    </source>
</reference>
<protein>
    <recommendedName>
        <fullName evidence="2">Ornithine carbamoyltransferase</fullName>
        <shortName evidence="2">OTCase</shortName>
        <ecNumber evidence="2">2.1.3.3</ecNumber>
    </recommendedName>
</protein>
<evidence type="ECO:0000250" key="1"/>
<evidence type="ECO:0000255" key="2">
    <source>
        <dbReference type="HAMAP-Rule" id="MF_01109"/>
    </source>
</evidence>
<sequence length="337" mass="37974">MTQVFQGRNFLAEKDFTREEFEYLIDFAAHLKDLKKRGVPHRYLEGKNIALLFEKTSTRTRAAFTTAAIDLGAHPEYLGANDIQLGKKESTEDTAKVLGRMFDGIEFRGFSQRMVEELGEFAGVPVWNGLTDEWHPTQMLADYLTVKENFGKLEGITLVYCGDGRNNVANSLLVAGTLMGVNVHIFSPKELFPDEEIVKLAEGFAKESGAHILVTDNADEAVKGADVLYTDVWVSMGEEDKFKERVELLQPYQVNMDLVKKANNENLIFLHCLPAFHDTNTVYGKDVADKYGVSEMEVTDEVFRSKYARHFDQAENRMHTIKAVMAATLGNLFIPKV</sequence>
<proteinExistence type="inferred from homology"/>
<organism>
    <name type="scientific">Streptococcus uberis (strain ATCC BAA-854 / 0140J)</name>
    <dbReference type="NCBI Taxonomy" id="218495"/>
    <lineage>
        <taxon>Bacteria</taxon>
        <taxon>Bacillati</taxon>
        <taxon>Bacillota</taxon>
        <taxon>Bacilli</taxon>
        <taxon>Lactobacillales</taxon>
        <taxon>Streptococcaceae</taxon>
        <taxon>Streptococcus</taxon>
    </lineage>
</organism>
<accession>B9DUY9</accession>
<comment type="function">
    <text evidence="1">Reversibly catalyzes the transfer of the carbamoyl group from carbamoyl phosphate (CP) to the N(epsilon) atom of ornithine (ORN) to produce L-citrulline.</text>
</comment>
<comment type="catalytic activity">
    <reaction evidence="2">
        <text>carbamoyl phosphate + L-ornithine = L-citrulline + phosphate + H(+)</text>
        <dbReference type="Rhea" id="RHEA:19513"/>
        <dbReference type="ChEBI" id="CHEBI:15378"/>
        <dbReference type="ChEBI" id="CHEBI:43474"/>
        <dbReference type="ChEBI" id="CHEBI:46911"/>
        <dbReference type="ChEBI" id="CHEBI:57743"/>
        <dbReference type="ChEBI" id="CHEBI:58228"/>
        <dbReference type="EC" id="2.1.3.3"/>
    </reaction>
</comment>
<comment type="pathway">
    <text evidence="2">Amino-acid degradation; L-arginine degradation via ADI pathway; carbamoyl phosphate from L-arginine: step 2/2.</text>
</comment>
<comment type="subcellular location">
    <subcellularLocation>
        <location evidence="2">Cytoplasm</location>
    </subcellularLocation>
</comment>
<comment type="similarity">
    <text evidence="2">Belongs to the aspartate/ornithine carbamoyltransferase superfamily. OTCase family.</text>
</comment>
<gene>
    <name evidence="2" type="primary">arcB</name>
    <name type="ordered locus">SUB1327</name>
</gene>